<dbReference type="EMBL" id="D26185">
    <property type="protein sequence ID" value="BAA05226.1"/>
    <property type="molecule type" value="Genomic_DNA"/>
</dbReference>
<dbReference type="EMBL" id="X62539">
    <property type="protein sequence ID" value="CAA44409.1"/>
    <property type="molecule type" value="Genomic_DNA"/>
</dbReference>
<dbReference type="EMBL" id="AL009126">
    <property type="protein sequence ID" value="CAB16133.1"/>
    <property type="molecule type" value="Genomic_DNA"/>
</dbReference>
<dbReference type="EMBL" id="M59938">
    <property type="protein sequence ID" value="AAA62694.1"/>
    <property type="molecule type" value="Genomic_DNA"/>
</dbReference>
<dbReference type="PIR" id="I40445">
    <property type="entry name" value="A38536"/>
</dbReference>
<dbReference type="RefSeq" id="NP_391976.1">
    <property type="nucleotide sequence ID" value="NC_000964.3"/>
</dbReference>
<dbReference type="RefSeq" id="WP_003226832.1">
    <property type="nucleotide sequence ID" value="NZ_OZ025638.1"/>
</dbReference>
<dbReference type="PDB" id="5NOC">
    <property type="method" value="NMR"/>
    <property type="chains" value="A/B=217-282"/>
</dbReference>
<dbReference type="PDB" id="6SDK">
    <property type="method" value="X-ray"/>
    <property type="resolution" value="1.81 A"/>
    <property type="chains" value="A/B/C/D=21-218"/>
</dbReference>
<dbReference type="PDBsum" id="5NOC"/>
<dbReference type="PDBsum" id="6SDK"/>
<dbReference type="BMRB" id="P26497"/>
<dbReference type="SMR" id="P26497"/>
<dbReference type="FunCoup" id="P26497">
    <property type="interactions" value="394"/>
</dbReference>
<dbReference type="IntAct" id="P26497">
    <property type="interactions" value="3"/>
</dbReference>
<dbReference type="STRING" id="224308.BSU40960"/>
<dbReference type="jPOST" id="P26497"/>
<dbReference type="PaxDb" id="224308-BSU40960"/>
<dbReference type="EnsemblBacteria" id="CAB16133">
    <property type="protein sequence ID" value="CAB16133"/>
    <property type="gene ID" value="BSU_40960"/>
</dbReference>
<dbReference type="GeneID" id="937907"/>
<dbReference type="KEGG" id="bsu:BSU40960"/>
<dbReference type="PATRIC" id="fig|224308.179.peg.4438"/>
<dbReference type="eggNOG" id="COG1475">
    <property type="taxonomic scope" value="Bacteria"/>
</dbReference>
<dbReference type="InParanoid" id="P26497"/>
<dbReference type="OrthoDB" id="9802051at2"/>
<dbReference type="PhylomeDB" id="P26497"/>
<dbReference type="BioCyc" id="BSUB:BSU40960-MONOMER"/>
<dbReference type="CD-CODE" id="7F56106F">
    <property type="entry name" value="ParABS DNA"/>
</dbReference>
<dbReference type="Proteomes" id="UP000001570">
    <property type="component" value="Chromosome"/>
</dbReference>
<dbReference type="GO" id="GO:0043590">
    <property type="term" value="C:bacterial nucleoid"/>
    <property type="evidence" value="ECO:0000314"/>
    <property type="project" value="CACAO"/>
</dbReference>
<dbReference type="GO" id="GO:0005694">
    <property type="term" value="C:chromosome"/>
    <property type="evidence" value="ECO:0000318"/>
    <property type="project" value="GO_Central"/>
</dbReference>
<dbReference type="GO" id="GO:0003677">
    <property type="term" value="F:DNA binding"/>
    <property type="evidence" value="ECO:0007669"/>
    <property type="project" value="UniProtKB-KW"/>
</dbReference>
<dbReference type="GO" id="GO:0007059">
    <property type="term" value="P:chromosome segregation"/>
    <property type="evidence" value="ECO:0000315"/>
    <property type="project" value="CACAO"/>
</dbReference>
<dbReference type="GO" id="GO:0045881">
    <property type="term" value="P:positive regulation of sporulation resulting in formation of a cellular spore"/>
    <property type="evidence" value="ECO:0000316"/>
    <property type="project" value="CACAO"/>
</dbReference>
<dbReference type="GO" id="GO:0030435">
    <property type="term" value="P:sporulation resulting in formation of a cellular spore"/>
    <property type="evidence" value="ECO:0007669"/>
    <property type="project" value="UniProtKB-KW"/>
</dbReference>
<dbReference type="CDD" id="cd16393">
    <property type="entry name" value="SPO0J_N"/>
    <property type="match status" value="1"/>
</dbReference>
<dbReference type="FunFam" id="1.10.10.2830:FF:000001">
    <property type="entry name" value="Chromosome partitioning protein ParB"/>
    <property type="match status" value="1"/>
</dbReference>
<dbReference type="FunFam" id="3.90.1530.30:FF:000001">
    <property type="entry name" value="Chromosome partitioning protein ParB"/>
    <property type="match status" value="1"/>
</dbReference>
<dbReference type="Gene3D" id="1.10.10.2830">
    <property type="match status" value="1"/>
</dbReference>
<dbReference type="Gene3D" id="3.90.1530.30">
    <property type="match status" value="1"/>
</dbReference>
<dbReference type="InterPro" id="IPR050336">
    <property type="entry name" value="Chromosome_partition/occlusion"/>
</dbReference>
<dbReference type="InterPro" id="IPR041468">
    <property type="entry name" value="HTH_ParB/Spo0J"/>
</dbReference>
<dbReference type="InterPro" id="IPR004437">
    <property type="entry name" value="ParB/RepB/Spo0J"/>
</dbReference>
<dbReference type="InterPro" id="IPR003115">
    <property type="entry name" value="ParB/Sulfiredoxin_dom"/>
</dbReference>
<dbReference type="InterPro" id="IPR036086">
    <property type="entry name" value="ParB/Sulfiredoxin_sf"/>
</dbReference>
<dbReference type="InterPro" id="IPR057240">
    <property type="entry name" value="ParB_dimer_C"/>
</dbReference>
<dbReference type="NCBIfam" id="TIGR00180">
    <property type="entry name" value="parB_part"/>
    <property type="match status" value="1"/>
</dbReference>
<dbReference type="PANTHER" id="PTHR33375">
    <property type="entry name" value="CHROMOSOME-PARTITIONING PROTEIN PARB-RELATED"/>
    <property type="match status" value="1"/>
</dbReference>
<dbReference type="PANTHER" id="PTHR33375:SF1">
    <property type="entry name" value="CHROMOSOME-PARTITIONING PROTEIN PARB-RELATED"/>
    <property type="match status" value="1"/>
</dbReference>
<dbReference type="Pfam" id="PF17762">
    <property type="entry name" value="HTH_ParB"/>
    <property type="match status" value="1"/>
</dbReference>
<dbReference type="Pfam" id="PF23552">
    <property type="entry name" value="ParB_dimer"/>
    <property type="match status" value="1"/>
</dbReference>
<dbReference type="Pfam" id="PF02195">
    <property type="entry name" value="ParBc"/>
    <property type="match status" value="1"/>
</dbReference>
<dbReference type="SMART" id="SM00470">
    <property type="entry name" value="ParB"/>
    <property type="match status" value="1"/>
</dbReference>
<dbReference type="SUPFAM" id="SSF109709">
    <property type="entry name" value="KorB DNA-binding domain-like"/>
    <property type="match status" value="1"/>
</dbReference>
<dbReference type="SUPFAM" id="SSF110849">
    <property type="entry name" value="ParB/Sulfiredoxin"/>
    <property type="match status" value="1"/>
</dbReference>
<reference key="1">
    <citation type="journal article" date="1994" name="DNA Res.">
        <title>Systematic sequencing of the 180 kilobase region of the Bacillus subtilis chromosome containing the replication origin.</title>
        <authorList>
            <person name="Ogasawara N."/>
            <person name="Nakai S."/>
            <person name="Yoshikawa H."/>
        </authorList>
    </citation>
    <scope>NUCLEOTIDE SEQUENCE [GENOMIC DNA]</scope>
    <source>
        <strain>168</strain>
    </source>
</reference>
<reference key="2">
    <citation type="journal article" date="1992" name="Mol. Microbiol.">
        <title>Genes and their organization in the replication origin region of the bacterial chromosome.</title>
        <authorList>
            <person name="Ogasawara N."/>
            <person name="Yoshikawa H."/>
        </authorList>
    </citation>
    <scope>NUCLEOTIDE SEQUENCE [GENOMIC DNA]</scope>
    <source>
        <strain>168 / CRK2000</strain>
    </source>
</reference>
<reference key="3">
    <citation type="journal article" date="1997" name="Nature">
        <title>The complete genome sequence of the Gram-positive bacterium Bacillus subtilis.</title>
        <authorList>
            <person name="Kunst F."/>
            <person name="Ogasawara N."/>
            <person name="Moszer I."/>
            <person name="Albertini A.M."/>
            <person name="Alloni G."/>
            <person name="Azevedo V."/>
            <person name="Bertero M.G."/>
            <person name="Bessieres P."/>
            <person name="Bolotin A."/>
            <person name="Borchert S."/>
            <person name="Borriss R."/>
            <person name="Boursier L."/>
            <person name="Brans A."/>
            <person name="Braun M."/>
            <person name="Brignell S.C."/>
            <person name="Bron S."/>
            <person name="Brouillet S."/>
            <person name="Bruschi C.V."/>
            <person name="Caldwell B."/>
            <person name="Capuano V."/>
            <person name="Carter N.M."/>
            <person name="Choi S.-K."/>
            <person name="Codani J.-J."/>
            <person name="Connerton I.F."/>
            <person name="Cummings N.J."/>
            <person name="Daniel R.A."/>
            <person name="Denizot F."/>
            <person name="Devine K.M."/>
            <person name="Duesterhoeft A."/>
            <person name="Ehrlich S.D."/>
            <person name="Emmerson P.T."/>
            <person name="Entian K.-D."/>
            <person name="Errington J."/>
            <person name="Fabret C."/>
            <person name="Ferrari E."/>
            <person name="Foulger D."/>
            <person name="Fritz C."/>
            <person name="Fujita M."/>
            <person name="Fujita Y."/>
            <person name="Fuma S."/>
            <person name="Galizzi A."/>
            <person name="Galleron N."/>
            <person name="Ghim S.-Y."/>
            <person name="Glaser P."/>
            <person name="Goffeau A."/>
            <person name="Golightly E.J."/>
            <person name="Grandi G."/>
            <person name="Guiseppi G."/>
            <person name="Guy B.J."/>
            <person name="Haga K."/>
            <person name="Haiech J."/>
            <person name="Harwood C.R."/>
            <person name="Henaut A."/>
            <person name="Hilbert H."/>
            <person name="Holsappel S."/>
            <person name="Hosono S."/>
            <person name="Hullo M.-F."/>
            <person name="Itaya M."/>
            <person name="Jones L.-M."/>
            <person name="Joris B."/>
            <person name="Karamata D."/>
            <person name="Kasahara Y."/>
            <person name="Klaerr-Blanchard M."/>
            <person name="Klein C."/>
            <person name="Kobayashi Y."/>
            <person name="Koetter P."/>
            <person name="Koningstein G."/>
            <person name="Krogh S."/>
            <person name="Kumano M."/>
            <person name="Kurita K."/>
            <person name="Lapidus A."/>
            <person name="Lardinois S."/>
            <person name="Lauber J."/>
            <person name="Lazarevic V."/>
            <person name="Lee S.-M."/>
            <person name="Levine A."/>
            <person name="Liu H."/>
            <person name="Masuda S."/>
            <person name="Mauel C."/>
            <person name="Medigue C."/>
            <person name="Medina N."/>
            <person name="Mellado R.P."/>
            <person name="Mizuno M."/>
            <person name="Moestl D."/>
            <person name="Nakai S."/>
            <person name="Noback M."/>
            <person name="Noone D."/>
            <person name="O'Reilly M."/>
            <person name="Ogawa K."/>
            <person name="Ogiwara A."/>
            <person name="Oudega B."/>
            <person name="Park S.-H."/>
            <person name="Parro V."/>
            <person name="Pohl T.M."/>
            <person name="Portetelle D."/>
            <person name="Porwollik S."/>
            <person name="Prescott A.M."/>
            <person name="Presecan E."/>
            <person name="Pujic P."/>
            <person name="Purnelle B."/>
            <person name="Rapoport G."/>
            <person name="Rey M."/>
            <person name="Reynolds S."/>
            <person name="Rieger M."/>
            <person name="Rivolta C."/>
            <person name="Rocha E."/>
            <person name="Roche B."/>
            <person name="Rose M."/>
            <person name="Sadaie Y."/>
            <person name="Sato T."/>
            <person name="Scanlan E."/>
            <person name="Schleich S."/>
            <person name="Schroeter R."/>
            <person name="Scoffone F."/>
            <person name="Sekiguchi J."/>
            <person name="Sekowska A."/>
            <person name="Seror S.J."/>
            <person name="Serror P."/>
            <person name="Shin B.-S."/>
            <person name="Soldo B."/>
            <person name="Sorokin A."/>
            <person name="Tacconi E."/>
            <person name="Takagi T."/>
            <person name="Takahashi H."/>
            <person name="Takemaru K."/>
            <person name="Takeuchi M."/>
            <person name="Tamakoshi A."/>
            <person name="Tanaka T."/>
            <person name="Terpstra P."/>
            <person name="Tognoni A."/>
            <person name="Tosato V."/>
            <person name="Uchiyama S."/>
            <person name="Vandenbol M."/>
            <person name="Vannier F."/>
            <person name="Vassarotti A."/>
            <person name="Viari A."/>
            <person name="Wambutt R."/>
            <person name="Wedler E."/>
            <person name="Wedler H."/>
            <person name="Weitzenegger T."/>
            <person name="Winters P."/>
            <person name="Wipat A."/>
            <person name="Yamamoto H."/>
            <person name="Yamane K."/>
            <person name="Yasumoto K."/>
            <person name="Yata K."/>
            <person name="Yoshida K."/>
            <person name="Yoshikawa H.-F."/>
            <person name="Zumstein E."/>
            <person name="Yoshikawa H."/>
            <person name="Danchin A."/>
        </authorList>
    </citation>
    <scope>NUCLEOTIDE SEQUENCE [LARGE SCALE GENOMIC DNA]</scope>
    <source>
        <strain>168</strain>
    </source>
</reference>
<reference key="4">
    <citation type="journal article" date="1991" name="J. Bacteriol.">
        <title>The Bacillus subtilis spo0J gene: evidence for involvement in catabolite repression of sporulation.</title>
        <authorList>
            <person name="Mysliwiec T.H."/>
            <person name="Errington J."/>
            <person name="Vaidya A.B."/>
            <person name="Bramucci M.G."/>
        </authorList>
    </citation>
    <scope>NUCLEOTIDE SEQUENCE [GENOMIC DNA] OF 104-282</scope>
    <source>
        <strain>168</strain>
    </source>
</reference>
<reference key="5">
    <citation type="journal article" date="1994" name="J. Bacteriol.">
        <title>spo0J is required for normal chromosome segregation as well as the initiation of sporulation in Bacillus subtilis.</title>
        <authorList>
            <person name="Ireton K."/>
            <person name="Gunther N.W. IV"/>
            <person name="Grossman A.D."/>
        </authorList>
    </citation>
    <scope>FUNCTION</scope>
    <source>
        <strain>168 / JH642</strain>
    </source>
</reference>
<reference key="6">
    <citation type="journal article" date="2008" name="Cell">
        <title>Dynamic control of the DNA replication initiation protein DnaA by Soj/ParA.</title>
        <authorList>
            <person name="Murray H."/>
            <person name="Errington J."/>
        </authorList>
    </citation>
    <scope>FUNCTION</scope>
    <scope>SUBCELLULAR LOCATION</scope>
    <scope>DISRUPTION PHENOTYPE</scope>
    <source>
        <strain>168</strain>
    </source>
</reference>
<reference key="7">
    <citation type="journal article" date="2017" name="PLoS Genet.">
        <title>Rapid turnover of DnaA at replication origin regions contributes to initiation control of DNA replication.</title>
        <authorList>
            <person name="Schenk K."/>
            <person name="Hervas A.B."/>
            <person name="Roesch T.C."/>
            <person name="Eisemann M."/>
            <person name="Schmitt B.A."/>
            <person name="Dahlke S."/>
            <person name="Kleine-Borgmann L."/>
            <person name="Murray S.M."/>
            <person name="Graumann P.L."/>
        </authorList>
    </citation>
    <scope>DISRUPTION PHENOTYPE</scope>
</reference>
<gene>
    <name evidence="5 6" type="primary">spo0J</name>
    <name evidence="7" type="synonym">parB</name>
    <name type="ordered locus">BSU40960</name>
</gene>
<keyword id="KW-0002">3D-structure</keyword>
<keyword id="KW-0159">Chromosome partition</keyword>
<keyword id="KW-0963">Cytoplasm</keyword>
<keyword id="KW-0238">DNA-binding</keyword>
<keyword id="KW-1185">Reference proteome</keyword>
<keyword id="KW-0749">Sporulation</keyword>
<proteinExistence type="evidence at protein level"/>
<evidence type="ECO:0000255" key="1"/>
<evidence type="ECO:0000269" key="2">
    <source>
    </source>
</evidence>
<evidence type="ECO:0000269" key="3">
    <source>
    </source>
</evidence>
<evidence type="ECO:0000269" key="4">
    <source>
    </source>
</evidence>
<evidence type="ECO:0000303" key="5">
    <source>
    </source>
</evidence>
<evidence type="ECO:0000303" key="6">
    <source>
    </source>
</evidence>
<evidence type="ECO:0000303" key="7">
    <source>
    </source>
</evidence>
<evidence type="ECO:0000305" key="8"/>
<evidence type="ECO:0007829" key="9">
    <source>
        <dbReference type="PDB" id="5NOC"/>
    </source>
</evidence>
<evidence type="ECO:0007829" key="10">
    <source>
        <dbReference type="PDB" id="6SDK"/>
    </source>
</evidence>
<sequence length="282" mass="32210">MAKGLGKGINALFNQVDLSEETVEEIKIADLRPNPYQPRKHFDDEALAELKESVLQHGILQPLIVRKSLKGYDIVAGERRFRAAKLAGLDTVPAIVRELSEALMREIALLENLQREDLSPLEEAQAYDSLLKHLDLTQEQLAKRLGKSRPHIANHLRLLTLPENIQQLIAEGTLSMGHGRTLLGLKNKNKLEPLVQKVIAEQLNVRQLEQLIQQLNQNVPRETKKKEPVKDAVLKERESYLQNYFGTTVNIKRQKKKGKIEIEFFSNEDLDRILELLSERES</sequence>
<accession>P26497</accession>
<feature type="chain" id="PRO_0000178673" description="Stage 0 sporulation protein J">
    <location>
        <begin position="1"/>
        <end position="282"/>
    </location>
</feature>
<feature type="DNA-binding region" description="H-T-H motif" evidence="1">
    <location>
        <begin position="139"/>
        <end position="158"/>
    </location>
</feature>
<feature type="sequence conflict" description="In Ref. 4; AAA62694." evidence="8" ref="4">
    <original>I</original>
    <variation>N</variation>
    <location>
        <position position="152"/>
    </location>
</feature>
<feature type="sequence conflict" description="In Ref. 4; AAA62694." evidence="8" ref="4">
    <original>GT</original>
    <variation>A</variation>
    <location>
        <begin position="172"/>
        <end position="173"/>
    </location>
</feature>
<feature type="strand" evidence="10">
    <location>
        <begin position="21"/>
        <end position="27"/>
    </location>
</feature>
<feature type="helix" evidence="10">
    <location>
        <begin position="28"/>
        <end position="30"/>
    </location>
</feature>
<feature type="helix" evidence="10">
    <location>
        <begin position="44"/>
        <end position="57"/>
    </location>
</feature>
<feature type="strand" evidence="10">
    <location>
        <begin position="63"/>
        <end position="67"/>
    </location>
</feature>
<feature type="strand" evidence="10">
    <location>
        <begin position="69"/>
        <end position="76"/>
    </location>
</feature>
<feature type="helix" evidence="10">
    <location>
        <begin position="78"/>
        <end position="86"/>
    </location>
</feature>
<feature type="strand" evidence="10">
    <location>
        <begin position="90"/>
        <end position="96"/>
    </location>
</feature>
<feature type="helix" evidence="10">
    <location>
        <begin position="101"/>
        <end position="113"/>
    </location>
</feature>
<feature type="helix" evidence="10">
    <location>
        <begin position="120"/>
        <end position="134"/>
    </location>
</feature>
<feature type="helix" evidence="10">
    <location>
        <begin position="138"/>
        <end position="145"/>
    </location>
</feature>
<feature type="helix" evidence="10">
    <location>
        <begin position="149"/>
        <end position="158"/>
    </location>
</feature>
<feature type="helix" evidence="10">
    <location>
        <begin position="163"/>
        <end position="170"/>
    </location>
</feature>
<feature type="helix" evidence="10">
    <location>
        <begin position="176"/>
        <end position="183"/>
    </location>
</feature>
<feature type="helix" evidence="10">
    <location>
        <begin position="188"/>
        <end position="190"/>
    </location>
</feature>
<feature type="helix" evidence="10">
    <location>
        <begin position="191"/>
        <end position="201"/>
    </location>
</feature>
<feature type="helix" evidence="10">
    <location>
        <begin position="205"/>
        <end position="216"/>
    </location>
</feature>
<feature type="helix" evidence="9">
    <location>
        <begin position="232"/>
        <end position="245"/>
    </location>
</feature>
<feature type="strand" evidence="9">
    <location>
        <begin position="249"/>
        <end position="252"/>
    </location>
</feature>
<feature type="strand" evidence="9">
    <location>
        <begin position="258"/>
        <end position="266"/>
    </location>
</feature>
<feature type="helix" evidence="9">
    <location>
        <begin position="267"/>
        <end position="278"/>
    </location>
</feature>
<feature type="turn" evidence="9">
    <location>
        <begin position="279"/>
        <end position="281"/>
    </location>
</feature>
<comment type="function">
    <text evidence="2 4">Required for the initiation of sporulation and for normal chromosome segregation (PubMed:8071208, PubMed:18854156). Antagonizes sporulation inhibition by Soj (PubMed:8071208, PubMed:18854156). It probably interacts with a specific DNA site and other proteins involved in partitioning and cell division, and antagonizes Soj in response to cell cycle events related to chromosome partitioning.</text>
</comment>
<comment type="subcellular location">
    <subcellularLocation>
        <location evidence="2">Cytoplasm</location>
        <location evidence="2">Nucleoid</location>
    </subcellularLocation>
</comment>
<comment type="disruption phenotype">
    <text evidence="2 3">Increased number of chromosome origins, probably due to early DNA replication initiation (PubMed:18854156). In a double soj-spo0J deletion DnaA transiently arrests for longer at its chromosomal binding sites, not just at oriC (PubMed:28166228).</text>
</comment>
<comment type="similarity">
    <text evidence="8">Belongs to the ParB family.</text>
</comment>
<name>SP0J_BACSU</name>
<organism>
    <name type="scientific">Bacillus subtilis (strain 168)</name>
    <dbReference type="NCBI Taxonomy" id="224308"/>
    <lineage>
        <taxon>Bacteria</taxon>
        <taxon>Bacillati</taxon>
        <taxon>Bacillota</taxon>
        <taxon>Bacilli</taxon>
        <taxon>Bacillales</taxon>
        <taxon>Bacillaceae</taxon>
        <taxon>Bacillus</taxon>
    </lineage>
</organism>
<protein>
    <recommendedName>
        <fullName evidence="6">Stage 0 sporulation protein J</fullName>
    </recommendedName>
</protein>